<keyword id="KW-0963">Cytoplasm</keyword>
<keyword id="KW-0238">DNA-binding</keyword>
<keyword id="KW-1185">Reference proteome</keyword>
<proteinExistence type="inferred from homology"/>
<protein>
    <recommendedName>
        <fullName evidence="1">Nucleoid-associated protein IL1848</fullName>
    </recommendedName>
</protein>
<gene>
    <name type="ordered locus">IL1848</name>
</gene>
<accession>Q5QWR0</accession>
<evidence type="ECO:0000255" key="1">
    <source>
        <dbReference type="HAMAP-Rule" id="MF_00274"/>
    </source>
</evidence>
<evidence type="ECO:0000256" key="2">
    <source>
        <dbReference type="SAM" id="MobiDB-lite"/>
    </source>
</evidence>
<organism>
    <name type="scientific">Idiomarina loihiensis (strain ATCC BAA-735 / DSM 15497 / L2-TR)</name>
    <dbReference type="NCBI Taxonomy" id="283942"/>
    <lineage>
        <taxon>Bacteria</taxon>
        <taxon>Pseudomonadati</taxon>
        <taxon>Pseudomonadota</taxon>
        <taxon>Gammaproteobacteria</taxon>
        <taxon>Alteromonadales</taxon>
        <taxon>Idiomarinaceae</taxon>
        <taxon>Idiomarina</taxon>
    </lineage>
</organism>
<name>Y1848_IDILO</name>
<feature type="chain" id="PRO_1000078760" description="Nucleoid-associated protein IL1848">
    <location>
        <begin position="1"/>
        <end position="108"/>
    </location>
</feature>
<feature type="region of interest" description="Disordered" evidence="2">
    <location>
        <begin position="1"/>
        <end position="26"/>
    </location>
</feature>
<feature type="region of interest" description="Disordered" evidence="2">
    <location>
        <begin position="88"/>
        <end position="108"/>
    </location>
</feature>
<feature type="compositionally biased region" description="Low complexity" evidence="2">
    <location>
        <begin position="9"/>
        <end position="26"/>
    </location>
</feature>
<dbReference type="EMBL" id="AE017340">
    <property type="protein sequence ID" value="AAV82680.1"/>
    <property type="molecule type" value="Genomic_DNA"/>
</dbReference>
<dbReference type="RefSeq" id="WP_011235080.1">
    <property type="nucleotide sequence ID" value="NC_006512.1"/>
</dbReference>
<dbReference type="SMR" id="Q5QWR0"/>
<dbReference type="STRING" id="283942.IL1848"/>
<dbReference type="GeneID" id="41337032"/>
<dbReference type="KEGG" id="ilo:IL1848"/>
<dbReference type="eggNOG" id="COG0718">
    <property type="taxonomic scope" value="Bacteria"/>
</dbReference>
<dbReference type="HOGENOM" id="CLU_140930_0_0_6"/>
<dbReference type="OrthoDB" id="9808738at2"/>
<dbReference type="Proteomes" id="UP000001171">
    <property type="component" value="Chromosome"/>
</dbReference>
<dbReference type="GO" id="GO:0043590">
    <property type="term" value="C:bacterial nucleoid"/>
    <property type="evidence" value="ECO:0007669"/>
    <property type="project" value="UniProtKB-UniRule"/>
</dbReference>
<dbReference type="GO" id="GO:0005829">
    <property type="term" value="C:cytosol"/>
    <property type="evidence" value="ECO:0007669"/>
    <property type="project" value="TreeGrafter"/>
</dbReference>
<dbReference type="GO" id="GO:0003677">
    <property type="term" value="F:DNA binding"/>
    <property type="evidence" value="ECO:0007669"/>
    <property type="project" value="UniProtKB-UniRule"/>
</dbReference>
<dbReference type="FunFam" id="3.30.1310.10:FF:000001">
    <property type="entry name" value="Nucleoid-associated protein YbaB"/>
    <property type="match status" value="1"/>
</dbReference>
<dbReference type="Gene3D" id="3.30.1310.10">
    <property type="entry name" value="Nucleoid-associated protein YbaB-like domain"/>
    <property type="match status" value="1"/>
</dbReference>
<dbReference type="HAMAP" id="MF_00274">
    <property type="entry name" value="DNA_YbaB_EbfC"/>
    <property type="match status" value="1"/>
</dbReference>
<dbReference type="InterPro" id="IPR036894">
    <property type="entry name" value="YbaB-like_sf"/>
</dbReference>
<dbReference type="InterPro" id="IPR004401">
    <property type="entry name" value="YbaB/EbfC"/>
</dbReference>
<dbReference type="NCBIfam" id="TIGR00103">
    <property type="entry name" value="DNA_YbaB_EbfC"/>
    <property type="match status" value="1"/>
</dbReference>
<dbReference type="PANTHER" id="PTHR33449">
    <property type="entry name" value="NUCLEOID-ASSOCIATED PROTEIN YBAB"/>
    <property type="match status" value="1"/>
</dbReference>
<dbReference type="PANTHER" id="PTHR33449:SF1">
    <property type="entry name" value="NUCLEOID-ASSOCIATED PROTEIN YBAB"/>
    <property type="match status" value="1"/>
</dbReference>
<dbReference type="Pfam" id="PF02575">
    <property type="entry name" value="YbaB_DNA_bd"/>
    <property type="match status" value="1"/>
</dbReference>
<dbReference type="PIRSF" id="PIRSF004555">
    <property type="entry name" value="UCP004555"/>
    <property type="match status" value="1"/>
</dbReference>
<dbReference type="SUPFAM" id="SSF82607">
    <property type="entry name" value="YbaB-like"/>
    <property type="match status" value="1"/>
</dbReference>
<reference key="1">
    <citation type="journal article" date="2004" name="Proc. Natl. Acad. Sci. U.S.A.">
        <title>Genome sequence of the deep-sea gamma-proteobacterium Idiomarina loihiensis reveals amino acid fermentation as a source of carbon and energy.</title>
        <authorList>
            <person name="Hou S."/>
            <person name="Saw J.H."/>
            <person name="Lee K.S."/>
            <person name="Freitas T.A."/>
            <person name="Belisle C."/>
            <person name="Kawarabayasi Y."/>
            <person name="Donachie S.P."/>
            <person name="Pikina A."/>
            <person name="Galperin M.Y."/>
            <person name="Koonin E.V."/>
            <person name="Makarova K.S."/>
            <person name="Omelchenko M.V."/>
            <person name="Sorokin A."/>
            <person name="Wolf Y.I."/>
            <person name="Li Q.X."/>
            <person name="Keum Y.S."/>
            <person name="Campbell S."/>
            <person name="Denery J."/>
            <person name="Aizawa S."/>
            <person name="Shibata S."/>
            <person name="Malahoff A."/>
            <person name="Alam M."/>
        </authorList>
    </citation>
    <scope>NUCLEOTIDE SEQUENCE [LARGE SCALE GENOMIC DNA]</scope>
    <source>
        <strain>ATCC BAA-735 / DSM 15497 / L2-TR</strain>
    </source>
</reference>
<sequence length="108" mass="11908">MFKGGMGNMMKQAQQMQERMQQAQEEVANMEVTGEAGAGLVKITMLGNHNVKRVSIDPSLMEDDQEMLEDLIAAATNDAVRRVEETSKERMSEITGGMGLPPGFKMPF</sequence>
<comment type="function">
    <text evidence="1">Binds to DNA and alters its conformation. May be involved in regulation of gene expression, nucleoid organization and DNA protection.</text>
</comment>
<comment type="subunit">
    <text evidence="1">Homodimer.</text>
</comment>
<comment type="subcellular location">
    <subcellularLocation>
        <location evidence="1">Cytoplasm</location>
        <location evidence="1">Nucleoid</location>
    </subcellularLocation>
</comment>
<comment type="similarity">
    <text evidence="1">Belongs to the YbaB/EbfC family.</text>
</comment>